<keyword id="KW-0687">Ribonucleoprotein</keyword>
<keyword id="KW-0689">Ribosomal protein</keyword>
<keyword id="KW-0694">RNA-binding</keyword>
<keyword id="KW-0699">rRNA-binding</keyword>
<accession>B5YE70</accession>
<protein>
    <recommendedName>
        <fullName evidence="1">Small ribosomal subunit protein bS20</fullName>
    </recommendedName>
    <alternativeName>
        <fullName evidence="2">30S ribosomal protein S20</fullName>
    </alternativeName>
</protein>
<sequence>MANTKSAIKRIKISERNRIRNRIRLGKIKFYTKQFLKLLEENKIEEAKKVLPEVISAIDKAAQKGTLHKNTAARKKSKLMRLLNQKLSANLSS</sequence>
<proteinExistence type="inferred from homology"/>
<gene>
    <name evidence="1" type="primary">rpsT</name>
    <name type="ordered locus">DICTH_0977</name>
</gene>
<organism>
    <name type="scientific">Dictyoglomus thermophilum (strain ATCC 35947 / DSM 3960 / H-6-12)</name>
    <dbReference type="NCBI Taxonomy" id="309799"/>
    <lineage>
        <taxon>Bacteria</taxon>
        <taxon>Pseudomonadati</taxon>
        <taxon>Dictyoglomota</taxon>
        <taxon>Dictyoglomia</taxon>
        <taxon>Dictyoglomales</taxon>
        <taxon>Dictyoglomaceae</taxon>
        <taxon>Dictyoglomus</taxon>
    </lineage>
</organism>
<evidence type="ECO:0000255" key="1">
    <source>
        <dbReference type="HAMAP-Rule" id="MF_00500"/>
    </source>
</evidence>
<evidence type="ECO:0000305" key="2"/>
<name>RS20_DICT6</name>
<feature type="chain" id="PRO_1000126436" description="Small ribosomal subunit protein bS20">
    <location>
        <begin position="1"/>
        <end position="93"/>
    </location>
</feature>
<dbReference type="EMBL" id="CP001146">
    <property type="protein sequence ID" value="ACI19239.1"/>
    <property type="molecule type" value="Genomic_DNA"/>
</dbReference>
<dbReference type="RefSeq" id="WP_012547871.1">
    <property type="nucleotide sequence ID" value="NC_011297.1"/>
</dbReference>
<dbReference type="SMR" id="B5YE70"/>
<dbReference type="STRING" id="309799.DICTH_0977"/>
<dbReference type="PaxDb" id="309799-DICTH_0977"/>
<dbReference type="KEGG" id="dth:DICTH_0977"/>
<dbReference type="eggNOG" id="COG0268">
    <property type="taxonomic scope" value="Bacteria"/>
</dbReference>
<dbReference type="HOGENOM" id="CLU_160655_5_0_0"/>
<dbReference type="OrthoDB" id="9808392at2"/>
<dbReference type="Proteomes" id="UP000001733">
    <property type="component" value="Chromosome"/>
</dbReference>
<dbReference type="GO" id="GO:0005829">
    <property type="term" value="C:cytosol"/>
    <property type="evidence" value="ECO:0007669"/>
    <property type="project" value="TreeGrafter"/>
</dbReference>
<dbReference type="GO" id="GO:0015935">
    <property type="term" value="C:small ribosomal subunit"/>
    <property type="evidence" value="ECO:0007669"/>
    <property type="project" value="TreeGrafter"/>
</dbReference>
<dbReference type="GO" id="GO:0070181">
    <property type="term" value="F:small ribosomal subunit rRNA binding"/>
    <property type="evidence" value="ECO:0007669"/>
    <property type="project" value="TreeGrafter"/>
</dbReference>
<dbReference type="GO" id="GO:0003735">
    <property type="term" value="F:structural constituent of ribosome"/>
    <property type="evidence" value="ECO:0007669"/>
    <property type="project" value="InterPro"/>
</dbReference>
<dbReference type="GO" id="GO:0006412">
    <property type="term" value="P:translation"/>
    <property type="evidence" value="ECO:0007669"/>
    <property type="project" value="UniProtKB-UniRule"/>
</dbReference>
<dbReference type="FunFam" id="1.20.58.110:FF:000001">
    <property type="entry name" value="30S ribosomal protein S20"/>
    <property type="match status" value="1"/>
</dbReference>
<dbReference type="Gene3D" id="1.20.58.110">
    <property type="entry name" value="Ribosomal protein S20"/>
    <property type="match status" value="1"/>
</dbReference>
<dbReference type="HAMAP" id="MF_00500">
    <property type="entry name" value="Ribosomal_bS20"/>
    <property type="match status" value="1"/>
</dbReference>
<dbReference type="InterPro" id="IPR002583">
    <property type="entry name" value="Ribosomal_bS20"/>
</dbReference>
<dbReference type="InterPro" id="IPR036510">
    <property type="entry name" value="Ribosomal_bS20_sf"/>
</dbReference>
<dbReference type="NCBIfam" id="TIGR00029">
    <property type="entry name" value="S20"/>
    <property type="match status" value="1"/>
</dbReference>
<dbReference type="PANTHER" id="PTHR33398">
    <property type="entry name" value="30S RIBOSOMAL PROTEIN S20"/>
    <property type="match status" value="1"/>
</dbReference>
<dbReference type="PANTHER" id="PTHR33398:SF1">
    <property type="entry name" value="SMALL RIBOSOMAL SUBUNIT PROTEIN BS20C"/>
    <property type="match status" value="1"/>
</dbReference>
<dbReference type="Pfam" id="PF01649">
    <property type="entry name" value="Ribosomal_S20p"/>
    <property type="match status" value="1"/>
</dbReference>
<dbReference type="SUPFAM" id="SSF46992">
    <property type="entry name" value="Ribosomal protein S20"/>
    <property type="match status" value="1"/>
</dbReference>
<reference key="1">
    <citation type="journal article" date="2014" name="Genome Announc.">
        <title>Complete Genome Sequence of the Extreme Thermophile Dictyoglomus thermophilum H-6-12.</title>
        <authorList>
            <person name="Coil D.A."/>
            <person name="Badger J.H."/>
            <person name="Forberger H.C."/>
            <person name="Riggs F."/>
            <person name="Madupu R."/>
            <person name="Fedorova N."/>
            <person name="Ward N."/>
            <person name="Robb F.T."/>
            <person name="Eisen J.A."/>
        </authorList>
    </citation>
    <scope>NUCLEOTIDE SEQUENCE [LARGE SCALE GENOMIC DNA]</scope>
    <source>
        <strain>ATCC 35947 / DSM 3960 / H-6-12</strain>
    </source>
</reference>
<comment type="function">
    <text evidence="1">Binds directly to 16S ribosomal RNA.</text>
</comment>
<comment type="similarity">
    <text evidence="1">Belongs to the bacterial ribosomal protein bS20 family.</text>
</comment>